<keyword id="KW-0627">Porphyrin biosynthesis</keyword>
<keyword id="KW-0808">Transferase</keyword>
<proteinExistence type="inferred from homology"/>
<accession>B1XAH2</accession>
<sequence>MLDNVLRIATRQSPLALWQAHYVKDKLMASHPGLVVELVPMVTRGDVILDTPLAKVGGKGLFVKELEVALLENRADIAVHSMKDVPVEFPQGLGLVTICEREDPRDAFVSNNYDSLDALPAGSIVGTSSLRRQCQLAERRPDLIIRSLRGNVGTRLSKLDNGEYDAIILAVAGLKRLGLESRIRAALPPEISLPAVGQGAVGIECRLDDSRTRELLAALNHHETALRVTAERAMNTRLEGGCQVPIGSYAELIDGEIWLRALVGAPDGSQIIRGERRGAPQDAEQMGISLAEELLNNGAREILAEVYNGDAPA</sequence>
<reference key="1">
    <citation type="journal article" date="2008" name="J. Bacteriol.">
        <title>The complete genome sequence of Escherichia coli DH10B: insights into the biology of a laboratory workhorse.</title>
        <authorList>
            <person name="Durfee T."/>
            <person name="Nelson R."/>
            <person name="Baldwin S."/>
            <person name="Plunkett G. III"/>
            <person name="Burland V."/>
            <person name="Mau B."/>
            <person name="Petrosino J.F."/>
            <person name="Qin X."/>
            <person name="Muzny D.M."/>
            <person name="Ayele M."/>
            <person name="Gibbs R.A."/>
            <person name="Csorgo B."/>
            <person name="Posfai G."/>
            <person name="Weinstock G.M."/>
            <person name="Blattner F.R."/>
        </authorList>
    </citation>
    <scope>NUCLEOTIDE SEQUENCE [LARGE SCALE GENOMIC DNA]</scope>
    <source>
        <strain>K12 / DH10B</strain>
    </source>
</reference>
<evidence type="ECO:0000255" key="1">
    <source>
        <dbReference type="HAMAP-Rule" id="MF_00260"/>
    </source>
</evidence>
<name>HEM3_ECODH</name>
<protein>
    <recommendedName>
        <fullName evidence="1">Porphobilinogen deaminase</fullName>
        <shortName evidence="1">PBG</shortName>
        <ecNumber evidence="1">2.5.1.61</ecNumber>
    </recommendedName>
    <alternativeName>
        <fullName evidence="1">Hydroxymethylbilane synthase</fullName>
        <shortName evidence="1">HMBS</shortName>
    </alternativeName>
    <alternativeName>
        <fullName evidence="1">Pre-uroporphyrinogen synthase</fullName>
    </alternativeName>
</protein>
<organism>
    <name type="scientific">Escherichia coli (strain K12 / DH10B)</name>
    <dbReference type="NCBI Taxonomy" id="316385"/>
    <lineage>
        <taxon>Bacteria</taxon>
        <taxon>Pseudomonadati</taxon>
        <taxon>Pseudomonadota</taxon>
        <taxon>Gammaproteobacteria</taxon>
        <taxon>Enterobacterales</taxon>
        <taxon>Enterobacteriaceae</taxon>
        <taxon>Escherichia</taxon>
    </lineage>
</organism>
<comment type="function">
    <text evidence="1">Tetrapolymerization of the monopyrrole PBG into the hydroxymethylbilane pre-uroporphyrinogen in several discrete steps.</text>
</comment>
<comment type="catalytic activity">
    <reaction evidence="1">
        <text>4 porphobilinogen + H2O = hydroxymethylbilane + 4 NH4(+)</text>
        <dbReference type="Rhea" id="RHEA:13185"/>
        <dbReference type="ChEBI" id="CHEBI:15377"/>
        <dbReference type="ChEBI" id="CHEBI:28938"/>
        <dbReference type="ChEBI" id="CHEBI:57845"/>
        <dbReference type="ChEBI" id="CHEBI:58126"/>
        <dbReference type="EC" id="2.5.1.61"/>
    </reaction>
</comment>
<comment type="cofactor">
    <cofactor evidence="1">
        <name>dipyrromethane</name>
        <dbReference type="ChEBI" id="CHEBI:60342"/>
    </cofactor>
    <text evidence="1">Binds 1 dipyrromethane group covalently.</text>
</comment>
<comment type="pathway">
    <text evidence="1">Porphyrin-containing compound metabolism; protoporphyrin-IX biosynthesis; coproporphyrinogen-III from 5-aminolevulinate: step 2/4.</text>
</comment>
<comment type="subunit">
    <text evidence="1">Monomer.</text>
</comment>
<comment type="miscellaneous">
    <text evidence="1">The porphobilinogen subunits are added to the dipyrromethane group.</text>
</comment>
<comment type="similarity">
    <text evidence="1">Belongs to the HMBS family.</text>
</comment>
<feature type="chain" id="PRO_1000114149" description="Porphobilinogen deaminase">
    <location>
        <begin position="1"/>
        <end position="313"/>
    </location>
</feature>
<feature type="modified residue" description="S-(dipyrrolylmethanemethyl)cysteine" evidence="1">
    <location>
        <position position="242"/>
    </location>
</feature>
<dbReference type="EC" id="2.5.1.61" evidence="1"/>
<dbReference type="EMBL" id="CP000948">
    <property type="protein sequence ID" value="ACB04830.1"/>
    <property type="molecule type" value="Genomic_DNA"/>
</dbReference>
<dbReference type="RefSeq" id="WP_001338644.1">
    <property type="nucleotide sequence ID" value="NC_010473.1"/>
</dbReference>
<dbReference type="SMR" id="B1XAH2"/>
<dbReference type="KEGG" id="ecd:ECDH10B_3996"/>
<dbReference type="HOGENOM" id="CLU_019704_0_2_6"/>
<dbReference type="UniPathway" id="UPA00251">
    <property type="reaction ID" value="UER00319"/>
</dbReference>
<dbReference type="GO" id="GO:0005737">
    <property type="term" value="C:cytoplasm"/>
    <property type="evidence" value="ECO:0007669"/>
    <property type="project" value="TreeGrafter"/>
</dbReference>
<dbReference type="GO" id="GO:0004418">
    <property type="term" value="F:hydroxymethylbilane synthase activity"/>
    <property type="evidence" value="ECO:0007669"/>
    <property type="project" value="UniProtKB-UniRule"/>
</dbReference>
<dbReference type="GO" id="GO:0006782">
    <property type="term" value="P:protoporphyrinogen IX biosynthetic process"/>
    <property type="evidence" value="ECO:0007669"/>
    <property type="project" value="UniProtKB-UniRule"/>
</dbReference>
<dbReference type="CDD" id="cd13646">
    <property type="entry name" value="PBP2_EcHMBS_like"/>
    <property type="match status" value="1"/>
</dbReference>
<dbReference type="FunFam" id="3.30.160.40:FF:000002">
    <property type="entry name" value="Porphobilinogen deaminase"/>
    <property type="match status" value="1"/>
</dbReference>
<dbReference type="FunFam" id="3.40.190.10:FF:000004">
    <property type="entry name" value="Porphobilinogen deaminase"/>
    <property type="match status" value="1"/>
</dbReference>
<dbReference type="FunFam" id="3.40.190.10:FF:000005">
    <property type="entry name" value="Porphobilinogen deaminase"/>
    <property type="match status" value="1"/>
</dbReference>
<dbReference type="Gene3D" id="3.40.190.10">
    <property type="entry name" value="Periplasmic binding protein-like II"/>
    <property type="match status" value="2"/>
</dbReference>
<dbReference type="Gene3D" id="3.30.160.40">
    <property type="entry name" value="Porphobilinogen deaminase, C-terminal domain"/>
    <property type="match status" value="1"/>
</dbReference>
<dbReference type="HAMAP" id="MF_00260">
    <property type="entry name" value="Porphobil_deam"/>
    <property type="match status" value="1"/>
</dbReference>
<dbReference type="InterPro" id="IPR000860">
    <property type="entry name" value="HemC"/>
</dbReference>
<dbReference type="InterPro" id="IPR022419">
    <property type="entry name" value="Porphobilin_deaminase_cofac_BS"/>
</dbReference>
<dbReference type="InterPro" id="IPR022417">
    <property type="entry name" value="Porphobilin_deaminase_N"/>
</dbReference>
<dbReference type="InterPro" id="IPR022418">
    <property type="entry name" value="Porphobilinogen_deaminase_C"/>
</dbReference>
<dbReference type="InterPro" id="IPR036803">
    <property type="entry name" value="Porphobilinogen_deaminase_C_sf"/>
</dbReference>
<dbReference type="NCBIfam" id="TIGR00212">
    <property type="entry name" value="hemC"/>
    <property type="match status" value="1"/>
</dbReference>
<dbReference type="PANTHER" id="PTHR11557">
    <property type="entry name" value="PORPHOBILINOGEN DEAMINASE"/>
    <property type="match status" value="1"/>
</dbReference>
<dbReference type="PANTHER" id="PTHR11557:SF0">
    <property type="entry name" value="PORPHOBILINOGEN DEAMINASE"/>
    <property type="match status" value="1"/>
</dbReference>
<dbReference type="Pfam" id="PF01379">
    <property type="entry name" value="Porphobil_deam"/>
    <property type="match status" value="1"/>
</dbReference>
<dbReference type="Pfam" id="PF03900">
    <property type="entry name" value="Porphobil_deamC"/>
    <property type="match status" value="1"/>
</dbReference>
<dbReference type="PIRSF" id="PIRSF001438">
    <property type="entry name" value="4pyrrol_synth_OHMeBilane_synth"/>
    <property type="match status" value="1"/>
</dbReference>
<dbReference type="PRINTS" id="PR00151">
    <property type="entry name" value="PORPHBDMNASE"/>
</dbReference>
<dbReference type="SUPFAM" id="SSF53850">
    <property type="entry name" value="Periplasmic binding protein-like II"/>
    <property type="match status" value="1"/>
</dbReference>
<dbReference type="SUPFAM" id="SSF54782">
    <property type="entry name" value="Porphobilinogen deaminase (hydroxymethylbilane synthase), C-terminal domain"/>
    <property type="match status" value="1"/>
</dbReference>
<dbReference type="PROSITE" id="PS00533">
    <property type="entry name" value="PORPHOBILINOGEN_DEAM"/>
    <property type="match status" value="1"/>
</dbReference>
<gene>
    <name evidence="1" type="primary">hemC</name>
    <name type="ordered locus">ECDH10B_3996</name>
</gene>